<comment type="function">
    <text evidence="1">Part of the ABC transporter complex PhnCDE involved in phosphonates import. Responsible for energy coupling to the transport system.</text>
</comment>
<comment type="catalytic activity">
    <reaction evidence="1">
        <text>phosphonate(out) + ATP + H2O = phosphonate(in) + ADP + phosphate + H(+)</text>
        <dbReference type="Rhea" id="RHEA:18065"/>
        <dbReference type="ChEBI" id="CHEBI:15377"/>
        <dbReference type="ChEBI" id="CHEBI:15378"/>
        <dbReference type="ChEBI" id="CHEBI:16215"/>
        <dbReference type="ChEBI" id="CHEBI:30616"/>
        <dbReference type="ChEBI" id="CHEBI:43474"/>
        <dbReference type="ChEBI" id="CHEBI:456216"/>
        <dbReference type="EC" id="7.3.2.2"/>
    </reaction>
</comment>
<comment type="subunit">
    <text evidence="1">The complex is composed of two ATP-binding proteins (PhnC), two transmembrane proteins (PhnE) and a solute-binding protein (PhnD).</text>
</comment>
<comment type="subcellular location">
    <subcellularLocation>
        <location evidence="1">Cell inner membrane</location>
        <topology evidence="1">Peripheral membrane protein</topology>
    </subcellularLocation>
</comment>
<comment type="similarity">
    <text evidence="1">Belongs to the ABC transporter superfamily. Phosphonates importer (TC 3.A.1.9.1) family.</text>
</comment>
<name>PHNC_CUPPJ</name>
<evidence type="ECO:0000255" key="1">
    <source>
        <dbReference type="HAMAP-Rule" id="MF_01713"/>
    </source>
</evidence>
<feature type="chain" id="PRO_0000274734" description="Phosphonates import ATP-binding protein PhnC">
    <location>
        <begin position="1"/>
        <end position="281"/>
    </location>
</feature>
<feature type="domain" description="ABC transporter" evidence="1">
    <location>
        <begin position="5"/>
        <end position="253"/>
    </location>
</feature>
<feature type="binding site" evidence="1">
    <location>
        <begin position="38"/>
        <end position="45"/>
    </location>
    <ligand>
        <name>ATP</name>
        <dbReference type="ChEBI" id="CHEBI:30616"/>
    </ligand>
</feature>
<proteinExistence type="inferred from homology"/>
<protein>
    <recommendedName>
        <fullName evidence="1">Phosphonates import ATP-binding protein PhnC</fullName>
        <ecNumber evidence="1">7.3.2.2</ecNumber>
    </recommendedName>
</protein>
<keyword id="KW-0067">ATP-binding</keyword>
<keyword id="KW-0997">Cell inner membrane</keyword>
<keyword id="KW-1003">Cell membrane</keyword>
<keyword id="KW-0472">Membrane</keyword>
<keyword id="KW-0547">Nucleotide-binding</keyword>
<keyword id="KW-0918">Phosphonate transport</keyword>
<keyword id="KW-1278">Translocase</keyword>
<keyword id="KW-0813">Transport</keyword>
<accession>Q46TK4</accession>
<dbReference type="EC" id="7.3.2.2" evidence="1"/>
<dbReference type="EMBL" id="CP000091">
    <property type="protein sequence ID" value="AAZ63530.1"/>
    <property type="molecule type" value="Genomic_DNA"/>
</dbReference>
<dbReference type="SMR" id="Q46TK4"/>
<dbReference type="STRING" id="264198.Reut_B4177"/>
<dbReference type="KEGG" id="reu:Reut_B4177"/>
<dbReference type="eggNOG" id="COG3638">
    <property type="taxonomic scope" value="Bacteria"/>
</dbReference>
<dbReference type="HOGENOM" id="CLU_000604_1_22_4"/>
<dbReference type="OrthoDB" id="9802264at2"/>
<dbReference type="GO" id="GO:0005886">
    <property type="term" value="C:plasma membrane"/>
    <property type="evidence" value="ECO:0007669"/>
    <property type="project" value="UniProtKB-SubCell"/>
</dbReference>
<dbReference type="GO" id="GO:0015416">
    <property type="term" value="F:ABC-type phosphonate transporter activity"/>
    <property type="evidence" value="ECO:0007669"/>
    <property type="project" value="UniProtKB-EC"/>
</dbReference>
<dbReference type="GO" id="GO:0005524">
    <property type="term" value="F:ATP binding"/>
    <property type="evidence" value="ECO:0007669"/>
    <property type="project" value="UniProtKB-KW"/>
</dbReference>
<dbReference type="GO" id="GO:0016887">
    <property type="term" value="F:ATP hydrolysis activity"/>
    <property type="evidence" value="ECO:0007669"/>
    <property type="project" value="InterPro"/>
</dbReference>
<dbReference type="CDD" id="cd03256">
    <property type="entry name" value="ABC_PhnC_transporter"/>
    <property type="match status" value="1"/>
</dbReference>
<dbReference type="Gene3D" id="3.40.50.300">
    <property type="entry name" value="P-loop containing nucleotide triphosphate hydrolases"/>
    <property type="match status" value="1"/>
</dbReference>
<dbReference type="InterPro" id="IPR003593">
    <property type="entry name" value="AAA+_ATPase"/>
</dbReference>
<dbReference type="InterPro" id="IPR003439">
    <property type="entry name" value="ABC_transporter-like_ATP-bd"/>
</dbReference>
<dbReference type="InterPro" id="IPR017871">
    <property type="entry name" value="ABC_transporter-like_CS"/>
</dbReference>
<dbReference type="InterPro" id="IPR012693">
    <property type="entry name" value="ABC_transpr_PhnC"/>
</dbReference>
<dbReference type="InterPro" id="IPR050086">
    <property type="entry name" value="MetN_ABC_transporter-like"/>
</dbReference>
<dbReference type="InterPro" id="IPR027417">
    <property type="entry name" value="P-loop_NTPase"/>
</dbReference>
<dbReference type="NCBIfam" id="TIGR02315">
    <property type="entry name" value="ABC_phnC"/>
    <property type="match status" value="1"/>
</dbReference>
<dbReference type="PANTHER" id="PTHR43166">
    <property type="entry name" value="AMINO ACID IMPORT ATP-BINDING PROTEIN"/>
    <property type="match status" value="1"/>
</dbReference>
<dbReference type="PANTHER" id="PTHR43166:SF6">
    <property type="entry name" value="PHOSPHONATES IMPORT ATP-BINDING PROTEIN PHNC"/>
    <property type="match status" value="1"/>
</dbReference>
<dbReference type="Pfam" id="PF00005">
    <property type="entry name" value="ABC_tran"/>
    <property type="match status" value="1"/>
</dbReference>
<dbReference type="SMART" id="SM00382">
    <property type="entry name" value="AAA"/>
    <property type="match status" value="1"/>
</dbReference>
<dbReference type="SUPFAM" id="SSF52540">
    <property type="entry name" value="P-loop containing nucleoside triphosphate hydrolases"/>
    <property type="match status" value="1"/>
</dbReference>
<dbReference type="PROSITE" id="PS00211">
    <property type="entry name" value="ABC_TRANSPORTER_1"/>
    <property type="match status" value="1"/>
</dbReference>
<dbReference type="PROSITE" id="PS50893">
    <property type="entry name" value="ABC_TRANSPORTER_2"/>
    <property type="match status" value="1"/>
</dbReference>
<dbReference type="PROSITE" id="PS51249">
    <property type="entry name" value="PHNC"/>
    <property type="match status" value="1"/>
</dbReference>
<sequence length="281" mass="30297">MTHAIEVCGLTKSFRADRKALDDVTLHVAPGEMVALLGASGSGKSTLLRHIAGFVTSDAGAGEIVVNGRAVQRHGRLARNVRSVRSEIGFVFQQFNLVGRLPVMTNVLVGMLSRLPKWRSLLRLFKANEIQAGLHALAQVGIDDYAFQRASTLSGGQQQRAAIARTLVQNARVILADEPIASLDPESSRRVMSLLAQINRTRQVAVVVSLHQVDVAMRYCPRVVALRHGKVVYDGPSAALTPDMLRDLYGTEAEELLHDTLDSEPDAVPVPALAGMNIAAA</sequence>
<reference key="1">
    <citation type="journal article" date="2010" name="PLoS ONE">
        <title>The complete multipartite genome sequence of Cupriavidus necator JMP134, a versatile pollutant degrader.</title>
        <authorList>
            <person name="Lykidis A."/>
            <person name="Perez-Pantoja D."/>
            <person name="Ledger T."/>
            <person name="Mavromatis K."/>
            <person name="Anderson I.J."/>
            <person name="Ivanova N.N."/>
            <person name="Hooper S.D."/>
            <person name="Lapidus A."/>
            <person name="Lucas S."/>
            <person name="Gonzalez B."/>
            <person name="Kyrpides N.C."/>
        </authorList>
    </citation>
    <scope>NUCLEOTIDE SEQUENCE [LARGE SCALE GENOMIC DNA]</scope>
    <source>
        <strain>JMP134 / LMG 1197</strain>
    </source>
</reference>
<gene>
    <name evidence="1" type="primary">phnC</name>
    <name type="ordered locus">Reut_B4177</name>
</gene>
<organism>
    <name type="scientific">Cupriavidus pinatubonensis (strain JMP 134 / LMG 1197)</name>
    <name type="common">Cupriavidus necator (strain JMP 134)</name>
    <dbReference type="NCBI Taxonomy" id="264198"/>
    <lineage>
        <taxon>Bacteria</taxon>
        <taxon>Pseudomonadati</taxon>
        <taxon>Pseudomonadota</taxon>
        <taxon>Betaproteobacteria</taxon>
        <taxon>Burkholderiales</taxon>
        <taxon>Burkholderiaceae</taxon>
        <taxon>Cupriavidus</taxon>
    </lineage>
</organism>